<organism>
    <name type="scientific">Patiria pectinifera</name>
    <name type="common">Starfish</name>
    <name type="synonym">Asterina pectinifera</name>
    <dbReference type="NCBI Taxonomy" id="7594"/>
    <lineage>
        <taxon>Eukaryota</taxon>
        <taxon>Metazoa</taxon>
        <taxon>Echinodermata</taxon>
        <taxon>Eleutherozoa</taxon>
        <taxon>Asterozoa</taxon>
        <taxon>Asteroidea</taxon>
        <taxon>Valvatacea</taxon>
        <taxon>Valvatida</taxon>
        <taxon>Asterinidae</taxon>
        <taxon>Patiria</taxon>
    </lineage>
</organism>
<proteinExistence type="inferred from homology"/>
<keyword id="KW-0249">Electron transport</keyword>
<keyword id="KW-0472">Membrane</keyword>
<keyword id="KW-0496">Mitochondrion</keyword>
<keyword id="KW-0999">Mitochondrion inner membrane</keyword>
<keyword id="KW-0520">NAD</keyword>
<keyword id="KW-0679">Respiratory chain</keyword>
<keyword id="KW-1278">Translocase</keyword>
<keyword id="KW-0812">Transmembrane</keyword>
<keyword id="KW-1133">Transmembrane helix</keyword>
<keyword id="KW-0813">Transport</keyword>
<keyword id="KW-0830">Ubiquinone</keyword>
<comment type="function">
    <text evidence="1">Core subunit of the mitochondrial membrane respiratory chain NADH dehydrogenase (Complex I) that is believed to belong to the minimal assembly required for catalysis. Complex I functions in the transfer of electrons from NADH to the respiratory chain. The immediate electron acceptor for the enzyme is believed to be ubiquinone (By similarity).</text>
</comment>
<comment type="catalytic activity">
    <reaction>
        <text>a ubiquinone + NADH + 5 H(+)(in) = a ubiquinol + NAD(+) + 4 H(+)(out)</text>
        <dbReference type="Rhea" id="RHEA:29091"/>
        <dbReference type="Rhea" id="RHEA-COMP:9565"/>
        <dbReference type="Rhea" id="RHEA-COMP:9566"/>
        <dbReference type="ChEBI" id="CHEBI:15378"/>
        <dbReference type="ChEBI" id="CHEBI:16389"/>
        <dbReference type="ChEBI" id="CHEBI:17976"/>
        <dbReference type="ChEBI" id="CHEBI:57540"/>
        <dbReference type="ChEBI" id="CHEBI:57945"/>
        <dbReference type="EC" id="7.1.1.2"/>
    </reaction>
</comment>
<comment type="subcellular location">
    <subcellularLocation>
        <location evidence="1">Mitochondrion inner membrane</location>
        <topology evidence="1">Multi-pass membrane protein</topology>
    </subcellularLocation>
</comment>
<comment type="similarity">
    <text evidence="3">Belongs to the complex I subunit 5 family.</text>
</comment>
<comment type="sequence caution" evidence="3">
    <conflict type="erroneous initiation">
        <sequence resource="EMBL-CDS" id="AAA65517"/>
    </conflict>
</comment>
<sequence length="643" mass="71300">MNINPSIIILTINISIIITLLSSVFFFQNETNPSNLNSSSYSLGIFHNTSFNYLFSNSLFFTSLLKTLAILSLFPLFIEIIFNIPDTTVSLFNWLPNNGFSLNVEFRFDLKFNTFLSVALIVSWSILEFSYYYMDNDPNPNNFFRLLIIFLLNMIILTSTNNIFLLFIGWEGVGFLSFLLISWWTSRANANNSAIQAVIYNRVGDIGILLFFSLSITLFNTWSLPEIFSISAPNTFNNLLLVGLLIAAAGKSAQFGLHPWLPAAMEGPTPVFSIRHSSTMVVAGIFLLIRLSPLYACSSNFNTWCLILGSITAIFAATTAISQHDIKKIVAYSTTSQLGLMMVAIGLNQPSIALFHICTHAFFKAMLFLSSGSIIHSLNDEQDIRKMGGLHFILPNTAACIILGSLALSGIPFLPGFYSKDLILEIGLTNFSNFMGIVLSLLATLLTSVYSFRIIFFCFIKNPSFSPLAPINEENNNLTNSLNRLALGTILSGWILTNLTVLVPIITISSVLKTAALLLTITGVLFSISILQELTLNISPPTAYNTNSFTTNQWFYENISHILFLFYSFTISLSLSTRNIDRGWSENIGAQGIAITSSNASQSYQLSQTGYIKQYLLFSFLTLLIIIALSLTTISQLSPSFDI</sequence>
<gene>
    <name type="primary">ND5</name>
</gene>
<evidence type="ECO:0000250" key="1"/>
<evidence type="ECO:0000255" key="2"/>
<evidence type="ECO:0000305" key="3"/>
<feature type="chain" id="PRO_0000118065" description="NADH-ubiquinone oxidoreductase chain 5">
    <location>
        <begin position="1"/>
        <end position="643"/>
    </location>
</feature>
<feature type="transmembrane region" description="Helical" evidence="2">
    <location>
        <begin position="7"/>
        <end position="27"/>
    </location>
</feature>
<feature type="transmembrane region" description="Helical" evidence="2">
    <location>
        <begin position="64"/>
        <end position="84"/>
    </location>
</feature>
<feature type="transmembrane region" description="Helical" evidence="2">
    <location>
        <begin position="114"/>
        <end position="134"/>
    </location>
</feature>
<feature type="transmembrane region" description="Helical" evidence="2">
    <location>
        <begin position="140"/>
        <end position="160"/>
    </location>
</feature>
<feature type="transmembrane region" description="Helical" evidence="2">
    <location>
        <begin position="163"/>
        <end position="183"/>
    </location>
</feature>
<feature type="transmembrane region" description="Helical" evidence="2">
    <location>
        <begin position="208"/>
        <end position="228"/>
    </location>
</feature>
<feature type="transmembrane region" description="Helical" evidence="2">
    <location>
        <begin position="230"/>
        <end position="250"/>
    </location>
</feature>
<feature type="transmembrane region" description="Helical" evidence="2">
    <location>
        <begin position="277"/>
        <end position="297"/>
    </location>
</feature>
<feature type="transmembrane region" description="Helical" evidence="2">
    <location>
        <begin position="301"/>
        <end position="321"/>
    </location>
</feature>
<feature type="transmembrane region" description="Helical" evidence="2">
    <location>
        <begin position="338"/>
        <end position="358"/>
    </location>
</feature>
<feature type="transmembrane region" description="Helical" evidence="2">
    <location>
        <begin position="398"/>
        <end position="418"/>
    </location>
</feature>
<feature type="transmembrane region" description="Helical" evidence="2">
    <location>
        <begin position="437"/>
        <end position="457"/>
    </location>
</feature>
<feature type="transmembrane region" description="Helical" evidence="2">
    <location>
        <begin position="486"/>
        <end position="506"/>
    </location>
</feature>
<feature type="transmembrane region" description="Helical" evidence="2">
    <location>
        <begin position="511"/>
        <end position="531"/>
    </location>
</feature>
<feature type="transmembrane region" description="Helical" evidence="2">
    <location>
        <begin position="555"/>
        <end position="575"/>
    </location>
</feature>
<feature type="transmembrane region" description="Helical" evidence="2">
    <location>
        <begin position="615"/>
        <end position="635"/>
    </location>
</feature>
<geneLocation type="mitochondrion"/>
<protein>
    <recommendedName>
        <fullName>NADH-ubiquinone oxidoreductase chain 5</fullName>
        <ecNumber>7.1.1.2</ecNumber>
    </recommendedName>
    <alternativeName>
        <fullName>NADH dehydrogenase subunit 5</fullName>
    </alternativeName>
</protein>
<accession>P11993</accession>
<accession>Q33816</accession>
<dbReference type="EC" id="7.1.1.2"/>
<dbReference type="EMBL" id="D16387">
    <property type="protein sequence ID" value="BAA03875.2"/>
    <property type="molecule type" value="Genomic_DNA"/>
</dbReference>
<dbReference type="EMBL" id="M17619">
    <property type="protein sequence ID" value="AAA65517.2"/>
    <property type="status" value="ALT_INIT"/>
    <property type="molecule type" value="Genomic_DNA"/>
</dbReference>
<dbReference type="PIR" id="S70592">
    <property type="entry name" value="S70592"/>
</dbReference>
<dbReference type="RefSeq" id="NP_008163.2">
    <property type="nucleotide sequence ID" value="NC_001627.1"/>
</dbReference>
<dbReference type="SMR" id="P11993"/>
<dbReference type="GeneID" id="807825"/>
<dbReference type="CTD" id="4540"/>
<dbReference type="GO" id="GO:0005743">
    <property type="term" value="C:mitochondrial inner membrane"/>
    <property type="evidence" value="ECO:0007669"/>
    <property type="project" value="UniProtKB-SubCell"/>
</dbReference>
<dbReference type="GO" id="GO:0008137">
    <property type="term" value="F:NADH dehydrogenase (ubiquinone) activity"/>
    <property type="evidence" value="ECO:0007669"/>
    <property type="project" value="UniProtKB-EC"/>
</dbReference>
<dbReference type="GO" id="GO:0042773">
    <property type="term" value="P:ATP synthesis coupled electron transport"/>
    <property type="evidence" value="ECO:0007669"/>
    <property type="project" value="InterPro"/>
</dbReference>
<dbReference type="GO" id="GO:0015990">
    <property type="term" value="P:electron transport coupled proton transport"/>
    <property type="evidence" value="ECO:0007669"/>
    <property type="project" value="TreeGrafter"/>
</dbReference>
<dbReference type="InterPro" id="IPR010934">
    <property type="entry name" value="NADH_DH_su5_C"/>
</dbReference>
<dbReference type="InterPro" id="IPR018393">
    <property type="entry name" value="NADHpl_OxRdtase_5_subgr"/>
</dbReference>
<dbReference type="InterPro" id="IPR001750">
    <property type="entry name" value="ND/Mrp_TM"/>
</dbReference>
<dbReference type="InterPro" id="IPR003945">
    <property type="entry name" value="NU5C-like"/>
</dbReference>
<dbReference type="InterPro" id="IPR001516">
    <property type="entry name" value="Proton_antipo_N"/>
</dbReference>
<dbReference type="NCBIfam" id="TIGR01974">
    <property type="entry name" value="NDH_I_L"/>
    <property type="match status" value="1"/>
</dbReference>
<dbReference type="PANTHER" id="PTHR42829">
    <property type="entry name" value="NADH-UBIQUINONE OXIDOREDUCTASE CHAIN 5"/>
    <property type="match status" value="1"/>
</dbReference>
<dbReference type="PANTHER" id="PTHR42829:SF2">
    <property type="entry name" value="NADH-UBIQUINONE OXIDOREDUCTASE CHAIN 5"/>
    <property type="match status" value="1"/>
</dbReference>
<dbReference type="Pfam" id="PF06455">
    <property type="entry name" value="NADH5_C"/>
    <property type="match status" value="1"/>
</dbReference>
<dbReference type="Pfam" id="PF00361">
    <property type="entry name" value="Proton_antipo_M"/>
    <property type="match status" value="1"/>
</dbReference>
<dbReference type="Pfam" id="PF00662">
    <property type="entry name" value="Proton_antipo_N"/>
    <property type="match status" value="1"/>
</dbReference>
<dbReference type="PRINTS" id="PR01434">
    <property type="entry name" value="NADHDHGNASE5"/>
</dbReference>
<reference key="1">
    <citation type="journal article" date="1995" name="Genetics">
        <title>Nucleotide sequence and gene organization of the starfish Asterina pectinifera mitochondrial genome.</title>
        <authorList>
            <person name="Asakawa S."/>
            <person name="Himeno H."/>
            <person name="Miura K."/>
            <person name="Watanabe K."/>
        </authorList>
    </citation>
    <scope>NUCLEOTIDE SEQUENCE [GENOMIC DNA]</scope>
    <source>
        <tissue>Ovary</tissue>
    </source>
</reference>
<reference key="2">
    <citation type="journal article" date="1987" name="Gene">
        <title>Unusual genetic codes and a novel gene structure for tRNA(AGYSer) in starfish mitochondrial DNA.</title>
        <authorList>
            <person name="Himeno H."/>
            <person name="Masaki H."/>
            <person name="Kawai T."/>
            <person name="Ohta T."/>
            <person name="Kumagai I."/>
            <person name="Miura K."/>
            <person name="Watanabe K."/>
        </authorList>
    </citation>
    <scope>NUCLEOTIDE SEQUENCE [GENOMIC DNA] OF 1-515</scope>
</reference>
<name>NU5M_PATPE</name>